<protein>
    <recommendedName>
        <fullName evidence="4">DDB1- and CUL4-associated factor 12</fullName>
    </recommendedName>
    <alternativeName>
        <fullName>WD repeat-containing protein 40A</fullName>
    </alternativeName>
</protein>
<name>DCA12_MACFA</name>
<keyword id="KW-0963">Cytoplasm</keyword>
<keyword id="KW-0206">Cytoskeleton</keyword>
<keyword id="KW-0539">Nucleus</keyword>
<keyword id="KW-0597">Phosphoprotein</keyword>
<keyword id="KW-1185">Reference proteome</keyword>
<keyword id="KW-0677">Repeat</keyword>
<keyword id="KW-0833">Ubl conjugation pathway</keyword>
<keyword id="KW-0853">WD repeat</keyword>
<comment type="function">
    <text evidence="1 2">Substrate-recognition component of a DCX (DDB1-CUL4-X-box) E3 ubiquitin-protein ligase complex of the DesCEND (destruction via C-end degrons) pathway, which recognizes a C-degron located at the extreme C terminus of target proteins, leading to their ubiquitination and degradation. The C-degron recognized by the DesCEND pathway is usually a motif of less than ten residues and can be present in full-length proteins, truncated proteins or proteolytically cleaved forms (By similarity). The DCX(DCAF12) complex specifically recognizes proteins with a diglutamate (Glu-Glu) at the C-terminus, such as MAGEA3, MAGEA6 and CCT5, leading to their ubiquitination and degradation. Ubiquitination of MAGEA3, MAGEA6 by DCX(DCAF12) complex is required for starvation-induced autophagy (By similarity). Also directly recognizes the C-terminal glutamate-leucine (Glu-Leu) degron as an alternative degron in proteins such as MOV10, leading to their ubiquitination and degradation. Controls the protein level of MOV10 during spermatogenesis and in T cells, especially after their activation (By similarity).</text>
</comment>
<comment type="pathway">
    <text evidence="1">Protein modification; protein ubiquitination.</text>
</comment>
<comment type="subunit">
    <text evidence="1">Component of the DCX(DCAF12) E3 ubiquitin ligase complex, at least composed of CUL4 (CUL4A or CUL4B), DDB1, DCAF12 and RBX1.</text>
</comment>
<comment type="subcellular location">
    <subcellularLocation>
        <location evidence="1">Cytoplasm</location>
    </subcellularLocation>
    <subcellularLocation>
        <location evidence="1">Cytoplasm</location>
        <location evidence="1">Cytoskeleton</location>
        <location evidence="1">Microtubule organizing center</location>
        <location evidence="1">Centrosome</location>
    </subcellularLocation>
    <subcellularLocation>
        <location evidence="1">Nucleus</location>
    </subcellularLocation>
</comment>
<comment type="similarity">
    <text evidence="4">Belongs to the WD repeat DCAF12 family.</text>
</comment>
<reference key="1">
    <citation type="submission" date="2005-06" db="EMBL/GenBank/DDBJ databases">
        <title>DNA sequences of macaque genes expressed in brain or testis and its evolutionary implications.</title>
        <authorList>
            <consortium name="International consortium for macaque cDNA sequencing and analysis"/>
        </authorList>
    </citation>
    <scope>NUCLEOTIDE SEQUENCE [LARGE SCALE MRNA]</scope>
    <source>
        <tissue>Testis</tissue>
    </source>
</reference>
<feature type="chain" id="PRO_0000306841" description="DDB1- and CUL4-associated factor 12">
    <location>
        <begin position="1"/>
        <end position="453"/>
    </location>
</feature>
<feature type="repeat" description="WD 1">
    <location>
        <begin position="138"/>
        <end position="178"/>
    </location>
</feature>
<feature type="repeat" description="WD 2">
    <location>
        <begin position="182"/>
        <end position="220"/>
    </location>
</feature>
<feature type="repeat" description="WD 3">
    <location>
        <begin position="250"/>
        <end position="289"/>
    </location>
</feature>
<feature type="repeat" description="WD 4">
    <location>
        <begin position="338"/>
        <end position="375"/>
    </location>
</feature>
<feature type="region of interest" description="Required for nuclear location and interaction with MOV10" evidence="1">
    <location>
        <begin position="1"/>
        <end position="38"/>
    </location>
</feature>
<feature type="region of interest" description="Disordered" evidence="3">
    <location>
        <begin position="1"/>
        <end position="26"/>
    </location>
</feature>
<feature type="compositionally biased region" description="Basic residues" evidence="3">
    <location>
        <begin position="1"/>
        <end position="12"/>
    </location>
</feature>
<feature type="modified residue" description="Phosphoserine" evidence="1">
    <location>
        <position position="15"/>
    </location>
</feature>
<dbReference type="EMBL" id="AB179269">
    <property type="protein sequence ID" value="BAE02320.1"/>
    <property type="molecule type" value="mRNA"/>
</dbReference>
<dbReference type="RefSeq" id="NP_001271872.1">
    <property type="nucleotide sequence ID" value="NM_001284943.1"/>
</dbReference>
<dbReference type="RefSeq" id="XP_045229311.1">
    <property type="nucleotide sequence ID" value="XM_045373376.2"/>
</dbReference>
<dbReference type="SMR" id="Q4R3J7"/>
<dbReference type="STRING" id="9541.ENSMFAP00000035503"/>
<dbReference type="Ensembl" id="ENSMFAT00000009742.2">
    <property type="protein sequence ID" value="ENSMFAP00000035503.1"/>
    <property type="gene ID" value="ENSMFAG00000036190.2"/>
</dbReference>
<dbReference type="GeneID" id="101925316"/>
<dbReference type="VEuPathDB" id="HostDB:ENSMFAG00000036190"/>
<dbReference type="eggNOG" id="ENOG502QR7U">
    <property type="taxonomic scope" value="Eukaryota"/>
</dbReference>
<dbReference type="GeneTree" id="ENSGT00940000158028"/>
<dbReference type="OMA" id="GGEQYGW"/>
<dbReference type="UniPathway" id="UPA00143"/>
<dbReference type="Proteomes" id="UP000233100">
    <property type="component" value="Chromosome 15"/>
</dbReference>
<dbReference type="Bgee" id="ENSMFAG00000036190">
    <property type="expression patterns" value="Expressed in bone marrow and 13 other cell types or tissues"/>
</dbReference>
<dbReference type="GO" id="GO:0005813">
    <property type="term" value="C:centrosome"/>
    <property type="evidence" value="ECO:0007669"/>
    <property type="project" value="UniProtKB-SubCell"/>
</dbReference>
<dbReference type="GO" id="GO:0080008">
    <property type="term" value="C:Cul4-RING E3 ubiquitin ligase complex"/>
    <property type="evidence" value="ECO:0000250"/>
    <property type="project" value="UniProtKB"/>
</dbReference>
<dbReference type="GO" id="GO:0005737">
    <property type="term" value="C:cytoplasm"/>
    <property type="evidence" value="ECO:0007669"/>
    <property type="project" value="UniProtKB-SubCell"/>
</dbReference>
<dbReference type="GO" id="GO:0005634">
    <property type="term" value="C:nucleus"/>
    <property type="evidence" value="ECO:0007669"/>
    <property type="project" value="UniProtKB-SubCell"/>
</dbReference>
<dbReference type="GO" id="GO:1990756">
    <property type="term" value="F:ubiquitin-like ligase-substrate adaptor activity"/>
    <property type="evidence" value="ECO:0000250"/>
    <property type="project" value="UniProtKB"/>
</dbReference>
<dbReference type="GO" id="GO:0016567">
    <property type="term" value="P:protein ubiquitination"/>
    <property type="evidence" value="ECO:0007669"/>
    <property type="project" value="UniProtKB-UniPathway"/>
</dbReference>
<dbReference type="GO" id="GO:0010506">
    <property type="term" value="P:regulation of autophagy"/>
    <property type="evidence" value="ECO:0000250"/>
    <property type="project" value="UniProtKB"/>
</dbReference>
<dbReference type="GO" id="GO:0140627">
    <property type="term" value="P:ubiquitin-dependent protein catabolic process via the C-end degron rule pathway"/>
    <property type="evidence" value="ECO:0000250"/>
    <property type="project" value="UniProtKB"/>
</dbReference>
<dbReference type="FunFam" id="2.130.10.10:FF:001190">
    <property type="entry name" value="DDB1 and CUL4 associated factor 12"/>
    <property type="match status" value="1"/>
</dbReference>
<dbReference type="FunFam" id="2.130.10.10:FF:000253">
    <property type="entry name" value="DDB1- and CUL4-associated factor 12"/>
    <property type="match status" value="1"/>
</dbReference>
<dbReference type="Gene3D" id="2.130.10.10">
    <property type="entry name" value="YVTN repeat-like/Quinoprotein amine dehydrogenase"/>
    <property type="match status" value="2"/>
</dbReference>
<dbReference type="InterPro" id="IPR056151">
    <property type="entry name" value="Beta-prop_DCAF12"/>
</dbReference>
<dbReference type="InterPro" id="IPR051191">
    <property type="entry name" value="DCAF12"/>
</dbReference>
<dbReference type="InterPro" id="IPR015943">
    <property type="entry name" value="WD40/YVTN_repeat-like_dom_sf"/>
</dbReference>
<dbReference type="InterPro" id="IPR019775">
    <property type="entry name" value="WD40_repeat_CS"/>
</dbReference>
<dbReference type="InterPro" id="IPR036322">
    <property type="entry name" value="WD40_repeat_dom_sf"/>
</dbReference>
<dbReference type="InterPro" id="IPR001680">
    <property type="entry name" value="WD40_rpt"/>
</dbReference>
<dbReference type="PANTHER" id="PTHR19860:SF10">
    <property type="entry name" value="DDB1- AND CUL4-ASSOCIATED FACTOR 12"/>
    <property type="match status" value="1"/>
</dbReference>
<dbReference type="PANTHER" id="PTHR19860">
    <property type="entry name" value="DDB1- AND CUL4-ASSOCIATED FACTOR 12-RELATED"/>
    <property type="match status" value="1"/>
</dbReference>
<dbReference type="Pfam" id="PF23760">
    <property type="entry name" value="Beta-prop_DCAF12"/>
    <property type="match status" value="1"/>
</dbReference>
<dbReference type="SMART" id="SM00320">
    <property type="entry name" value="WD40"/>
    <property type="match status" value="4"/>
</dbReference>
<dbReference type="SUPFAM" id="SSF50978">
    <property type="entry name" value="WD40 repeat-like"/>
    <property type="match status" value="1"/>
</dbReference>
<dbReference type="PROSITE" id="PS00678">
    <property type="entry name" value="WD_REPEATS_1"/>
    <property type="match status" value="1"/>
</dbReference>
<dbReference type="PROSITE" id="PS50082">
    <property type="entry name" value="WD_REPEATS_2"/>
    <property type="match status" value="1"/>
</dbReference>
<dbReference type="PROSITE" id="PS50294">
    <property type="entry name" value="WD_REPEATS_REGION"/>
    <property type="match status" value="1"/>
</dbReference>
<proteinExistence type="evidence at transcript level"/>
<evidence type="ECO:0000250" key="1">
    <source>
        <dbReference type="UniProtKB" id="Q5T6F0"/>
    </source>
</evidence>
<evidence type="ECO:0000250" key="2">
    <source>
        <dbReference type="UniProtKB" id="Q8BGZ3"/>
    </source>
</evidence>
<evidence type="ECO:0000256" key="3">
    <source>
        <dbReference type="SAM" id="MobiDB-lite"/>
    </source>
</evidence>
<evidence type="ECO:0000305" key="4"/>
<gene>
    <name type="primary">DCAF12</name>
    <name type="synonym">WDR40A</name>
    <name type="ORF">QtsA-16482</name>
</gene>
<sequence length="453" mass="50507">MARKAVSRKRKAPASPGAGSDAQGQQFGWDHTLHKRKRLPPVKRSLVYYLKNREVRLQNETSYSRVLHGYAAQQLPSLLKEREFHLGTLNKVFASQWLNHRQVVCGTKCNTLFVVDVQTSQITKIPILKDREPGGVTQQGCGIHAIELNPSRTLLATGGDNPNSLAIYRLPTLDPVCVGDDGHKDWIFSIAWISDTMAVSGSRDGSMGLWEVTDDVLTKSDARHNVSRVPVYAHITHKALKDIPKEDTNPDNCKVRALAFNSKNKELGAVSLDGYFHLWKAENTLSKLLSTKLPYCRENVCLAYGSEWSVYAVGSQAHVSFLDPRQPSYNVKSVCSRERGSGIRSVSFYEHIITVGTGQGSLLFYDIRAQRFLEERLSACYGSKPRLAGENLKLTTGKGWLNHDETWRNYFSDIDFFPNAVYTHCYDSSGTKLFVAGGPLPSGLHGNYAGLWS</sequence>
<accession>Q4R3J7</accession>
<organism>
    <name type="scientific">Macaca fascicularis</name>
    <name type="common">Crab-eating macaque</name>
    <name type="synonym">Cynomolgus monkey</name>
    <dbReference type="NCBI Taxonomy" id="9541"/>
    <lineage>
        <taxon>Eukaryota</taxon>
        <taxon>Metazoa</taxon>
        <taxon>Chordata</taxon>
        <taxon>Craniata</taxon>
        <taxon>Vertebrata</taxon>
        <taxon>Euteleostomi</taxon>
        <taxon>Mammalia</taxon>
        <taxon>Eutheria</taxon>
        <taxon>Euarchontoglires</taxon>
        <taxon>Primates</taxon>
        <taxon>Haplorrhini</taxon>
        <taxon>Catarrhini</taxon>
        <taxon>Cercopithecidae</taxon>
        <taxon>Cercopithecinae</taxon>
        <taxon>Macaca</taxon>
    </lineage>
</organism>